<proteinExistence type="inferred from homology"/>
<accession>A1AEU9</accession>
<gene>
    <name evidence="1" type="primary">cysI</name>
    <name type="ordered locus">Ecok1_26950</name>
    <name type="ORF">APECO1_3769</name>
</gene>
<evidence type="ECO:0000255" key="1">
    <source>
        <dbReference type="HAMAP-Rule" id="MF_01540"/>
    </source>
</evidence>
<protein>
    <recommendedName>
        <fullName evidence="1">Sulfite reductase [NADPH] hemoprotein beta-component</fullName>
        <shortName evidence="1">SiR-HP</shortName>
        <shortName evidence="1">SiRHP</shortName>
        <ecNumber evidence="1">1.8.1.2</ecNumber>
    </recommendedName>
</protein>
<reference key="1">
    <citation type="journal article" date="2007" name="J. Bacteriol.">
        <title>The genome sequence of avian pathogenic Escherichia coli strain O1:K1:H7 shares strong similarities with human extraintestinal pathogenic E. coli genomes.</title>
        <authorList>
            <person name="Johnson T.J."/>
            <person name="Kariyawasam S."/>
            <person name="Wannemuehler Y."/>
            <person name="Mangiamele P."/>
            <person name="Johnson S.J."/>
            <person name="Doetkott C."/>
            <person name="Skyberg J.A."/>
            <person name="Lynne A.M."/>
            <person name="Johnson J.R."/>
            <person name="Nolan L.K."/>
        </authorList>
    </citation>
    <scope>NUCLEOTIDE SEQUENCE [LARGE SCALE GENOMIC DNA]</scope>
</reference>
<dbReference type="EC" id="1.8.1.2" evidence="1"/>
<dbReference type="EMBL" id="CP000468">
    <property type="protein sequence ID" value="ABJ02189.1"/>
    <property type="molecule type" value="Genomic_DNA"/>
</dbReference>
<dbReference type="RefSeq" id="WP_001290708.1">
    <property type="nucleotide sequence ID" value="NZ_CADILS010000024.1"/>
</dbReference>
<dbReference type="SMR" id="A1AEU9"/>
<dbReference type="KEGG" id="ecv:APECO1_3769"/>
<dbReference type="HOGENOM" id="CLU_001975_3_2_6"/>
<dbReference type="UniPathway" id="UPA00140">
    <property type="reaction ID" value="UER00207"/>
</dbReference>
<dbReference type="Proteomes" id="UP000008216">
    <property type="component" value="Chromosome"/>
</dbReference>
<dbReference type="GO" id="GO:0009337">
    <property type="term" value="C:sulfite reductase complex (NADPH)"/>
    <property type="evidence" value="ECO:0007669"/>
    <property type="project" value="InterPro"/>
</dbReference>
<dbReference type="GO" id="GO:0051539">
    <property type="term" value="F:4 iron, 4 sulfur cluster binding"/>
    <property type="evidence" value="ECO:0007669"/>
    <property type="project" value="UniProtKB-KW"/>
</dbReference>
<dbReference type="GO" id="GO:0020037">
    <property type="term" value="F:heme binding"/>
    <property type="evidence" value="ECO:0007669"/>
    <property type="project" value="InterPro"/>
</dbReference>
<dbReference type="GO" id="GO:0046872">
    <property type="term" value="F:metal ion binding"/>
    <property type="evidence" value="ECO:0007669"/>
    <property type="project" value="UniProtKB-KW"/>
</dbReference>
<dbReference type="GO" id="GO:0050661">
    <property type="term" value="F:NADP binding"/>
    <property type="evidence" value="ECO:0007669"/>
    <property type="project" value="InterPro"/>
</dbReference>
<dbReference type="GO" id="GO:0050311">
    <property type="term" value="F:sulfite reductase (ferredoxin) activity"/>
    <property type="evidence" value="ECO:0007669"/>
    <property type="project" value="TreeGrafter"/>
</dbReference>
<dbReference type="GO" id="GO:0004783">
    <property type="term" value="F:sulfite reductase (NADPH) activity"/>
    <property type="evidence" value="ECO:0007669"/>
    <property type="project" value="UniProtKB-UniRule"/>
</dbReference>
<dbReference type="GO" id="GO:0019344">
    <property type="term" value="P:cysteine biosynthetic process"/>
    <property type="evidence" value="ECO:0007669"/>
    <property type="project" value="UniProtKB-KW"/>
</dbReference>
<dbReference type="GO" id="GO:0070814">
    <property type="term" value="P:hydrogen sulfide biosynthetic process"/>
    <property type="evidence" value="ECO:0007669"/>
    <property type="project" value="UniProtKB-UniRule"/>
</dbReference>
<dbReference type="GO" id="GO:0000103">
    <property type="term" value="P:sulfate assimilation"/>
    <property type="evidence" value="ECO:0007669"/>
    <property type="project" value="UniProtKB-UniRule"/>
</dbReference>
<dbReference type="FunFam" id="3.30.413.10:FF:000003">
    <property type="entry name" value="Sulfite reductase [NADPH] hemoprotein beta-component"/>
    <property type="match status" value="1"/>
</dbReference>
<dbReference type="FunFam" id="3.30.413.10:FF:000004">
    <property type="entry name" value="Sulfite reductase [NADPH] hemoprotein beta-component"/>
    <property type="match status" value="1"/>
</dbReference>
<dbReference type="Gene3D" id="3.30.413.10">
    <property type="entry name" value="Sulfite Reductase Hemoprotein, domain 1"/>
    <property type="match status" value="2"/>
</dbReference>
<dbReference type="HAMAP" id="MF_01540">
    <property type="entry name" value="CysI"/>
    <property type="match status" value="1"/>
</dbReference>
<dbReference type="InterPro" id="IPR011786">
    <property type="entry name" value="CysI"/>
</dbReference>
<dbReference type="InterPro" id="IPR005117">
    <property type="entry name" value="NiRdtase/SiRdtase_haem-b_fer"/>
</dbReference>
<dbReference type="InterPro" id="IPR036136">
    <property type="entry name" value="Nit/Sulf_reduc_fer-like_dom_sf"/>
</dbReference>
<dbReference type="InterPro" id="IPR006067">
    <property type="entry name" value="NO2/SO3_Rdtase_4Fe4S_dom"/>
</dbReference>
<dbReference type="InterPro" id="IPR045169">
    <property type="entry name" value="NO2/SO3_Rdtase_4Fe4S_prot"/>
</dbReference>
<dbReference type="InterPro" id="IPR045854">
    <property type="entry name" value="NO2/SO3_Rdtase_4Fe4S_sf"/>
</dbReference>
<dbReference type="InterPro" id="IPR006066">
    <property type="entry name" value="NO2/SO3_Rdtase_FeS/sirohaem_BS"/>
</dbReference>
<dbReference type="NCBIfam" id="TIGR02041">
    <property type="entry name" value="CysI"/>
    <property type="match status" value="1"/>
</dbReference>
<dbReference type="NCBIfam" id="NF010029">
    <property type="entry name" value="PRK13504.1"/>
    <property type="match status" value="1"/>
</dbReference>
<dbReference type="PANTHER" id="PTHR11493:SF47">
    <property type="entry name" value="SULFITE REDUCTASE [NADPH] SUBUNIT BETA"/>
    <property type="match status" value="1"/>
</dbReference>
<dbReference type="PANTHER" id="PTHR11493">
    <property type="entry name" value="SULFITE REDUCTASE [NADPH] SUBUNIT BETA-RELATED"/>
    <property type="match status" value="1"/>
</dbReference>
<dbReference type="Pfam" id="PF01077">
    <property type="entry name" value="NIR_SIR"/>
    <property type="match status" value="1"/>
</dbReference>
<dbReference type="Pfam" id="PF03460">
    <property type="entry name" value="NIR_SIR_ferr"/>
    <property type="match status" value="2"/>
</dbReference>
<dbReference type="PRINTS" id="PR00397">
    <property type="entry name" value="SIROHAEM"/>
</dbReference>
<dbReference type="SUPFAM" id="SSF56014">
    <property type="entry name" value="Nitrite and sulphite reductase 4Fe-4S domain-like"/>
    <property type="match status" value="2"/>
</dbReference>
<dbReference type="SUPFAM" id="SSF55124">
    <property type="entry name" value="Nitrite/Sulfite reductase N-terminal domain-like"/>
    <property type="match status" value="2"/>
</dbReference>
<dbReference type="PROSITE" id="PS00365">
    <property type="entry name" value="NIR_SIR"/>
    <property type="match status" value="1"/>
</dbReference>
<organism>
    <name type="scientific">Escherichia coli O1:K1 / APEC</name>
    <dbReference type="NCBI Taxonomy" id="405955"/>
    <lineage>
        <taxon>Bacteria</taxon>
        <taxon>Pseudomonadati</taxon>
        <taxon>Pseudomonadota</taxon>
        <taxon>Gammaproteobacteria</taxon>
        <taxon>Enterobacterales</taxon>
        <taxon>Enterobacteriaceae</taxon>
        <taxon>Escherichia</taxon>
    </lineage>
</organism>
<keyword id="KW-0004">4Fe-4S</keyword>
<keyword id="KW-0028">Amino-acid biosynthesis</keyword>
<keyword id="KW-0198">Cysteine biosynthesis</keyword>
<keyword id="KW-0349">Heme</keyword>
<keyword id="KW-0408">Iron</keyword>
<keyword id="KW-0411">Iron-sulfur</keyword>
<keyword id="KW-0479">Metal-binding</keyword>
<keyword id="KW-0521">NADP</keyword>
<keyword id="KW-0560">Oxidoreductase</keyword>
<keyword id="KW-1185">Reference proteome</keyword>
<comment type="function">
    <text evidence="1">Component of the sulfite reductase complex that catalyzes the 6-electron reduction of sulfite to sulfide. This is one of several activities required for the biosynthesis of L-cysteine from sulfate.</text>
</comment>
<comment type="catalytic activity">
    <reaction evidence="1">
        <text>hydrogen sulfide + 3 NADP(+) + 3 H2O = sulfite + 3 NADPH + 4 H(+)</text>
        <dbReference type="Rhea" id="RHEA:13801"/>
        <dbReference type="ChEBI" id="CHEBI:15377"/>
        <dbReference type="ChEBI" id="CHEBI:15378"/>
        <dbReference type="ChEBI" id="CHEBI:17359"/>
        <dbReference type="ChEBI" id="CHEBI:29919"/>
        <dbReference type="ChEBI" id="CHEBI:57783"/>
        <dbReference type="ChEBI" id="CHEBI:58349"/>
        <dbReference type="EC" id="1.8.1.2"/>
    </reaction>
</comment>
<comment type="cofactor">
    <cofactor evidence="1">
        <name>siroheme</name>
        <dbReference type="ChEBI" id="CHEBI:60052"/>
    </cofactor>
    <text evidence="1">Binds 1 siroheme per subunit.</text>
</comment>
<comment type="cofactor">
    <cofactor evidence="1">
        <name>[4Fe-4S] cluster</name>
        <dbReference type="ChEBI" id="CHEBI:49883"/>
    </cofactor>
    <text evidence="1">Binds 1 [4Fe-4S] cluster per subunit.</text>
</comment>
<comment type="pathway">
    <text evidence="1">Sulfur metabolism; hydrogen sulfide biosynthesis; hydrogen sulfide from sulfite (NADPH route): step 1/1.</text>
</comment>
<comment type="subunit">
    <text evidence="1">Alpha(8)-beta(8). The alpha component is a flavoprotein, the beta component is a hemoprotein.</text>
</comment>
<comment type="similarity">
    <text evidence="1">Belongs to the nitrite and sulfite reductase 4Fe-4S domain family.</text>
</comment>
<sequence>MSEKHPGPLVVEGKLTDAERMKLESNYLRGTIAEDLNDGLTGGFKGDNFLLIRFHGMYQQDDRDIRAERAEQKLEPRHAMLLRCRLPGGVITTKQWQAIDKFAGENTIYGSIRLTNRQTFQFHGILKKNVKPVHQMLHSVGLDALATANDMNRNVLCTSNPYESQLHAEAYEWAKKISEHLLPRTRAYAEIWLDQEKVATTDEEPILGQTYLPRKFKTTVVIPPQNDIDLHANDMNFVAIAENGKLVGFNLLVGGGLSIEHGNKKTYARTASEFGYLPLEHTLAVAEAVVTTQRDWGNRTDRKNAKTKYTLERVGVETFKAEVERRAGIKFEPIRPYEFTGRGDRIGWVKGIDDNWHLTLFIENGRILDYPGRPLKTGLLEIAKIHKGDFRITANQNLIIAGVPESEKAKIEKIAKESGLMNAVTPQRENSMACVSFPTCPLAMAEAERFLPSFIDNIDNLMAKHGVSDEHIVMRVTGCPNGCGRAMLAEVGLVGKAPGRYNLHLGGNRIGTRIPRMYKENITEPEILASLDELIGRWAKEREVGEGFGDFTVRAGIIRPVLDPARDLWD</sequence>
<feature type="chain" id="PRO_1000068760" description="Sulfite reductase [NADPH] hemoprotein beta-component">
    <location>
        <begin position="1"/>
        <end position="570"/>
    </location>
</feature>
<feature type="binding site" evidence="1">
    <location>
        <position position="434"/>
    </location>
    <ligand>
        <name>[4Fe-4S] cluster</name>
        <dbReference type="ChEBI" id="CHEBI:49883"/>
    </ligand>
</feature>
<feature type="binding site" evidence="1">
    <location>
        <position position="440"/>
    </location>
    <ligand>
        <name>[4Fe-4S] cluster</name>
        <dbReference type="ChEBI" id="CHEBI:49883"/>
    </ligand>
</feature>
<feature type="binding site" evidence="1">
    <location>
        <position position="479"/>
    </location>
    <ligand>
        <name>[4Fe-4S] cluster</name>
        <dbReference type="ChEBI" id="CHEBI:49883"/>
    </ligand>
</feature>
<feature type="binding site" evidence="1">
    <location>
        <position position="483"/>
    </location>
    <ligand>
        <name>[4Fe-4S] cluster</name>
        <dbReference type="ChEBI" id="CHEBI:49883"/>
    </ligand>
</feature>
<feature type="binding site" description="axial binding residue" evidence="1">
    <location>
        <position position="483"/>
    </location>
    <ligand>
        <name>siroheme</name>
        <dbReference type="ChEBI" id="CHEBI:60052"/>
    </ligand>
    <ligandPart>
        <name>Fe</name>
        <dbReference type="ChEBI" id="CHEBI:18248"/>
    </ligandPart>
</feature>
<name>CYSI_ECOK1</name>